<organism>
    <name type="scientific">Thermoanaerobacter pseudethanolicus (strain ATCC 33223 / 39E)</name>
    <name type="common">Clostridium thermohydrosulfuricum</name>
    <dbReference type="NCBI Taxonomy" id="340099"/>
    <lineage>
        <taxon>Bacteria</taxon>
        <taxon>Bacillati</taxon>
        <taxon>Bacillota</taxon>
        <taxon>Clostridia</taxon>
        <taxon>Thermoanaerobacterales</taxon>
        <taxon>Thermoanaerobacteraceae</taxon>
        <taxon>Thermoanaerobacter</taxon>
    </lineage>
</organism>
<dbReference type="EC" id="2.8.1.13" evidence="1"/>
<dbReference type="EMBL" id="CP000924">
    <property type="protein sequence ID" value="ABY94704.1"/>
    <property type="molecule type" value="Genomic_DNA"/>
</dbReference>
<dbReference type="SMR" id="B0K991"/>
<dbReference type="STRING" id="340099.Teth39_1049"/>
<dbReference type="KEGG" id="tpd:Teth39_1049"/>
<dbReference type="eggNOG" id="COG0482">
    <property type="taxonomic scope" value="Bacteria"/>
</dbReference>
<dbReference type="HOGENOM" id="CLU_035188_0_0_9"/>
<dbReference type="Proteomes" id="UP000002156">
    <property type="component" value="Chromosome"/>
</dbReference>
<dbReference type="GO" id="GO:0005737">
    <property type="term" value="C:cytoplasm"/>
    <property type="evidence" value="ECO:0007669"/>
    <property type="project" value="UniProtKB-SubCell"/>
</dbReference>
<dbReference type="GO" id="GO:0005524">
    <property type="term" value="F:ATP binding"/>
    <property type="evidence" value="ECO:0007669"/>
    <property type="project" value="UniProtKB-KW"/>
</dbReference>
<dbReference type="GO" id="GO:0000049">
    <property type="term" value="F:tRNA binding"/>
    <property type="evidence" value="ECO:0007669"/>
    <property type="project" value="UniProtKB-KW"/>
</dbReference>
<dbReference type="GO" id="GO:0103016">
    <property type="term" value="F:tRNA-uridine 2-sulfurtransferase activity"/>
    <property type="evidence" value="ECO:0007669"/>
    <property type="project" value="UniProtKB-EC"/>
</dbReference>
<dbReference type="GO" id="GO:0002143">
    <property type="term" value="P:tRNA wobble position uridine thiolation"/>
    <property type="evidence" value="ECO:0007669"/>
    <property type="project" value="TreeGrafter"/>
</dbReference>
<dbReference type="CDD" id="cd01998">
    <property type="entry name" value="MnmA_TRMU-like"/>
    <property type="match status" value="1"/>
</dbReference>
<dbReference type="FunFam" id="2.30.30.280:FF:000001">
    <property type="entry name" value="tRNA-specific 2-thiouridylase MnmA"/>
    <property type="match status" value="1"/>
</dbReference>
<dbReference type="FunFam" id="2.40.30.10:FF:000023">
    <property type="entry name" value="tRNA-specific 2-thiouridylase MnmA"/>
    <property type="match status" value="1"/>
</dbReference>
<dbReference type="FunFam" id="3.40.50.620:FF:000115">
    <property type="entry name" value="tRNA-specific 2-thiouridylase MnmA"/>
    <property type="match status" value="1"/>
</dbReference>
<dbReference type="Gene3D" id="2.30.30.280">
    <property type="entry name" value="Adenine nucleotide alpha hydrolases-like domains"/>
    <property type="match status" value="1"/>
</dbReference>
<dbReference type="Gene3D" id="3.40.50.620">
    <property type="entry name" value="HUPs"/>
    <property type="match status" value="1"/>
</dbReference>
<dbReference type="Gene3D" id="2.40.30.10">
    <property type="entry name" value="Translation factors"/>
    <property type="match status" value="1"/>
</dbReference>
<dbReference type="HAMAP" id="MF_00144">
    <property type="entry name" value="tRNA_thiouridyl_MnmA"/>
    <property type="match status" value="1"/>
</dbReference>
<dbReference type="InterPro" id="IPR004506">
    <property type="entry name" value="MnmA-like"/>
</dbReference>
<dbReference type="InterPro" id="IPR046885">
    <property type="entry name" value="MnmA-like_C"/>
</dbReference>
<dbReference type="InterPro" id="IPR046884">
    <property type="entry name" value="MnmA-like_central"/>
</dbReference>
<dbReference type="InterPro" id="IPR023382">
    <property type="entry name" value="MnmA-like_central_sf"/>
</dbReference>
<dbReference type="InterPro" id="IPR014729">
    <property type="entry name" value="Rossmann-like_a/b/a_fold"/>
</dbReference>
<dbReference type="NCBIfam" id="NF001138">
    <property type="entry name" value="PRK00143.1"/>
    <property type="match status" value="1"/>
</dbReference>
<dbReference type="NCBIfam" id="TIGR00420">
    <property type="entry name" value="trmU"/>
    <property type="match status" value="1"/>
</dbReference>
<dbReference type="PANTHER" id="PTHR11933:SF5">
    <property type="entry name" value="MITOCHONDRIAL TRNA-SPECIFIC 2-THIOURIDYLASE 1"/>
    <property type="match status" value="1"/>
</dbReference>
<dbReference type="PANTHER" id="PTHR11933">
    <property type="entry name" value="TRNA 5-METHYLAMINOMETHYL-2-THIOURIDYLATE -METHYLTRANSFERASE"/>
    <property type="match status" value="1"/>
</dbReference>
<dbReference type="Pfam" id="PF03054">
    <property type="entry name" value="tRNA_Me_trans"/>
    <property type="match status" value="1"/>
</dbReference>
<dbReference type="Pfam" id="PF20258">
    <property type="entry name" value="tRNA_Me_trans_C"/>
    <property type="match status" value="1"/>
</dbReference>
<dbReference type="Pfam" id="PF20259">
    <property type="entry name" value="tRNA_Me_trans_M"/>
    <property type="match status" value="1"/>
</dbReference>
<dbReference type="SUPFAM" id="SSF52402">
    <property type="entry name" value="Adenine nucleotide alpha hydrolases-like"/>
    <property type="match status" value="1"/>
</dbReference>
<gene>
    <name evidence="1" type="primary">mnmA2</name>
    <name type="ordered locus">Teth39_1049</name>
</gene>
<proteinExistence type="inferred from homology"/>
<sequence length="364" mass="41541">MEINNRVAIGMSGGVDSSVAAYLLKKQGFDVIGLTMRVWVDHEAKAFDSDKSCCSLKATQDAKKVAEILGIPHYTVDLSKIFYDKIVNYFVNEYLKGRTPNPCVLCNRQIKFGELLEKAFELGAYYIATGHYVRKEYDEKTKRYLLKKGIDSSKDQSYVLYRLTQKQLEHALFPLGNYKKEEIRALAEELKLPVAKKPESQEICFIPDNDYSGLIKRQVKDEIKPGEFRDVHGKFLGYHKGIIHYTIGQRRGLGLSSDRPLYVVDIDVKNNVVVVGHQEDVWGEELISSNNNFISIEKLEKEMKVTAKIRYTAKEEEAIIKPYEEDKVLVKFLKPQRAITPGQSVVFYDKDVVVGGGIIERKLK</sequence>
<protein>
    <recommendedName>
        <fullName evidence="1">tRNA-specific 2-thiouridylase MnmA 2</fullName>
        <ecNumber evidence="1">2.8.1.13</ecNumber>
    </recommendedName>
</protein>
<reference key="1">
    <citation type="submission" date="2008-01" db="EMBL/GenBank/DDBJ databases">
        <title>Complete sequence of Thermoanaerobacter pseudethanolicus 39E.</title>
        <authorList>
            <person name="Copeland A."/>
            <person name="Lucas S."/>
            <person name="Lapidus A."/>
            <person name="Barry K."/>
            <person name="Glavina del Rio T."/>
            <person name="Dalin E."/>
            <person name="Tice H."/>
            <person name="Pitluck S."/>
            <person name="Bruce D."/>
            <person name="Goodwin L."/>
            <person name="Saunders E."/>
            <person name="Brettin T."/>
            <person name="Detter J.C."/>
            <person name="Han C."/>
            <person name="Schmutz J."/>
            <person name="Larimer F."/>
            <person name="Land M."/>
            <person name="Hauser L."/>
            <person name="Kyrpides N."/>
            <person name="Lykidis A."/>
            <person name="Hemme C."/>
            <person name="Fields M.W."/>
            <person name="He Z."/>
            <person name="Zhou J."/>
            <person name="Richardson P."/>
        </authorList>
    </citation>
    <scope>NUCLEOTIDE SEQUENCE [LARGE SCALE GENOMIC DNA]</scope>
    <source>
        <strain>ATCC 33223 / DSM 2355 / 39E</strain>
    </source>
</reference>
<keyword id="KW-0067">ATP-binding</keyword>
<keyword id="KW-0963">Cytoplasm</keyword>
<keyword id="KW-1015">Disulfide bond</keyword>
<keyword id="KW-0547">Nucleotide-binding</keyword>
<keyword id="KW-1185">Reference proteome</keyword>
<keyword id="KW-0694">RNA-binding</keyword>
<keyword id="KW-0808">Transferase</keyword>
<keyword id="KW-0819">tRNA processing</keyword>
<keyword id="KW-0820">tRNA-binding</keyword>
<evidence type="ECO:0000255" key="1">
    <source>
        <dbReference type="HAMAP-Rule" id="MF_00144"/>
    </source>
</evidence>
<comment type="function">
    <text evidence="1">Catalyzes the 2-thiolation of uridine at the wobble position (U34) of tRNA, leading to the formation of s(2)U34.</text>
</comment>
<comment type="catalytic activity">
    <reaction evidence="1">
        <text>S-sulfanyl-L-cysteinyl-[protein] + uridine(34) in tRNA + AH2 + ATP = 2-thiouridine(34) in tRNA + L-cysteinyl-[protein] + A + AMP + diphosphate + H(+)</text>
        <dbReference type="Rhea" id="RHEA:47032"/>
        <dbReference type="Rhea" id="RHEA-COMP:10131"/>
        <dbReference type="Rhea" id="RHEA-COMP:11726"/>
        <dbReference type="Rhea" id="RHEA-COMP:11727"/>
        <dbReference type="Rhea" id="RHEA-COMP:11728"/>
        <dbReference type="ChEBI" id="CHEBI:13193"/>
        <dbReference type="ChEBI" id="CHEBI:15378"/>
        <dbReference type="ChEBI" id="CHEBI:17499"/>
        <dbReference type="ChEBI" id="CHEBI:29950"/>
        <dbReference type="ChEBI" id="CHEBI:30616"/>
        <dbReference type="ChEBI" id="CHEBI:33019"/>
        <dbReference type="ChEBI" id="CHEBI:61963"/>
        <dbReference type="ChEBI" id="CHEBI:65315"/>
        <dbReference type="ChEBI" id="CHEBI:87170"/>
        <dbReference type="ChEBI" id="CHEBI:456215"/>
        <dbReference type="EC" id="2.8.1.13"/>
    </reaction>
</comment>
<comment type="subcellular location">
    <subcellularLocation>
        <location evidence="1">Cytoplasm</location>
    </subcellularLocation>
</comment>
<comment type="similarity">
    <text evidence="1">Belongs to the MnmA/TRMU family.</text>
</comment>
<name>MNMA2_THEP3</name>
<feature type="chain" id="PRO_0000349839" description="tRNA-specific 2-thiouridylase MnmA 2">
    <location>
        <begin position="1"/>
        <end position="364"/>
    </location>
</feature>
<feature type="region of interest" description="Interaction with tRNA" evidence="1">
    <location>
        <begin position="154"/>
        <end position="156"/>
    </location>
</feature>
<feature type="region of interest" description="Interaction with tRNA" evidence="1">
    <location>
        <begin position="310"/>
        <end position="311"/>
    </location>
</feature>
<feature type="active site" description="Nucleophile" evidence="1">
    <location>
        <position position="106"/>
    </location>
</feature>
<feature type="active site" description="Cysteine persulfide intermediate" evidence="1">
    <location>
        <position position="204"/>
    </location>
</feature>
<feature type="binding site" evidence="1">
    <location>
        <begin position="10"/>
        <end position="17"/>
    </location>
    <ligand>
        <name>ATP</name>
        <dbReference type="ChEBI" id="CHEBI:30616"/>
    </ligand>
</feature>
<feature type="binding site" evidence="1">
    <location>
        <position position="36"/>
    </location>
    <ligand>
        <name>ATP</name>
        <dbReference type="ChEBI" id="CHEBI:30616"/>
    </ligand>
</feature>
<feature type="binding site" evidence="1">
    <location>
        <position position="130"/>
    </location>
    <ligand>
        <name>ATP</name>
        <dbReference type="ChEBI" id="CHEBI:30616"/>
    </ligand>
</feature>
<feature type="site" description="Interaction with tRNA" evidence="1">
    <location>
        <position position="131"/>
    </location>
</feature>
<feature type="site" description="Interaction with tRNA" evidence="1">
    <location>
        <position position="343"/>
    </location>
</feature>
<feature type="disulfide bond" description="Alternate" evidence="1">
    <location>
        <begin position="106"/>
        <end position="204"/>
    </location>
</feature>
<accession>B0K991</accession>